<proteinExistence type="evidence at protein level"/>
<keyword id="KW-0012">Acyltransferase</keyword>
<keyword id="KW-0489">Methyltransferase</keyword>
<keyword id="KW-0511">Multifunctional enzyme</keyword>
<keyword id="KW-0596">Phosphopantetheine</keyword>
<keyword id="KW-0597">Phosphoprotein</keyword>
<keyword id="KW-1185">Reference proteome</keyword>
<keyword id="KW-0677">Repeat</keyword>
<keyword id="KW-0808">Transferase</keyword>
<sequence>MAPAPSALVFGSQTTLPSVEAASRLRAALLLDPRLYRMRTSIESLPEIWPALAISDPALERVAGPAEKSLRQLCRWLSHSEFPDATEISELPATFVTPFTVILHTVLYMHYTDENGSRGHADVLRAVRNNGGVQGFCTGFLTAVSVATSPDLEALSRQASVALRLAVAIGAYIDLDLLDSDVSSVAVRSRAGKKGLEETLAQFPGAYISVITDELNATVTAPRASLDALSQSLASNGLSAKRFDLRGRFHHPAHQKALEGLYNLVASNPVFQFSHSELLAPVYSNIDGQLLSSDSIIDTLLQSILVQRCDWYASISTALHKRSNGEKTSVVQFSLVECIPPSVLRQARLSVQRITDVPVQNSPATVPAPLNAVRARIQTSEPIAIIGMGCKFPGADTLDEYWQLLAQGTSMCRTMPEERFKTSSLRRSPGEKLKFWGNFVNDVDAFDHRFFKKSSREAASMDPQQRLVLQVAYQTLESAEYSGLSGIKASRDVGCYLGLCASDYTDNVASHPPNAFSSLGTLRAFLSGKISHFFGWTGPSITYDTACSSSAVAIQAACRALQTGECSMALAGGVSLYTSPNFYQNLSAASFLSPTGPTKPFDAKGDGYCRGEGVGLVFLKPLSSALADHDNIMGVIAAAAVNQNQNSTAITVPHSESQIELYRKVVSEAGLHPHDVSFVEAHGTGTPVGDPIEFTSIRTVFGGSNRANPLAIASVKGNIGHTEGAAACINNYGAAGSNAAMIVTEAPTGARSEKQGTLPKCPIYVSANTVSSLKEYCKELLRSLRGRSPDCLASLAFQLANSQNRGFPHALITSVTSKAELEDQLSAVVENRNNSLHTVAPTERPVVLAFGGQVARSVGLSRQVYDSSAVLRTHLSNCDDILTSAGLNSIFPAIFRKEPIADVVLLHSALFSAQYACAMTWIEAGVIPAALIGHSFGQLTALSVGRVLSLKDGLGLITERAKLMRDAWGPEHGSMVSVQADVQTVARLMKAAETKDPKDALEIACFNGPTSHVVVGSADAADRLEAALTQESIRYKRLAVSHGFHSKFTEPLLLGLEQCAERLTFRTPKYAIETCSSGSSWSEFNASMIVQHTRTPVYYTEALARIEAKLGACTWLEVGTGGSVAGMIRGALNVPSDHLIQAVNLAGETGTAALADATVNLWKSSHKLQFWAFHRSERECYQPLELPPYQFEKTRHWLDWKDTMTEQATVTQSTREETSVEEFLTFVKYKDSTKQQAEFRISTEHEKYSFFVKGHAVLAEPLCPAPLYIDLACKAGQMVYSDTSETLIIPSVEDLEIQAPLGVGDRVIILRLQQSPFLKTAWTFCFCSRPVMGNSAEEQLHASGTVVLRENDTKTAAEFSRFGRLVSSKRVQEMKSDPDCHILQGPVVYQLFSRVVSYADYYKGVQSVYASGAEVTGRIRLPPTVKDADTRRPLLVDNFIQTAGIHVNCLTDVGAKEVYVCTKVDRVQSAAAFTEDLANVDASWIVHSSYHPTSEKEVVNDIFVFNAATGELAMFILGAHFTRVQISSLGRVLSRANTADAAPIKVAVPVQSPALRAQPKRVLLPPLTKRSITRPTLEISEKLKKTLSRVVEVPVADIHDGGILADLGVDSLLGTEVLTEINQVFNVSIPADEFALLTDVASISKCLASYLGVHDSGSQPEDLADADSVESDSDMPTGAVTSGITTPDDAVSRLADLLAENLEYDGTIEASNNLADLGLDSILSIELANDIKKIFNCDVDMSQLNMESTFADLIALVPALNIEQSLSSVPASLTTQGSDFEMAQHAFEQIRFDYDIYTKETGFYDFWKRVYPAQSRLVLAYTVEAFAQLGCDLALMHPGDRLPKIGYLPAHEKLVQQLYNILRDGMLVATSDSGFVRSDKPVDPTSSTRLLEEINTIAPQHASEHSLLHITGSKLADCLTGTADPLNLLFRSKANRDLLAEVYLNGPMYAAISRLLCSFLGNAFSDRQSSGTFQILELGGGTGGTTGHVLDYLVRSGIPFTYTFSDVSGSFVAAARKKFAGRPYMEYQVIDIEKEPADSLTGKFHAVISTNCIHATTNLEISTGNIHRMLRPDGFVALVEFTRNMYWFDLVFGLLEGWWLFEDGRQHVIASESFWNTSMRKAGFQHVSWTDGDSFEARTLRIIAGFRAPAVNEIYTPRLDSRDTETAVESVMYKQADGIPLFADIYYPPSVSNEPRPIALMIHGGGHIMLSRKDIRPKQTAHLHTLGFLPVSIDYRLCPETTLTEGPMRDVSDAMAWARSTLCSLPLLCPGLTLDPSRVVVVGWSTGGHLAMTTAFTSIERGLSPPDAILAFYCPTDYEDRVWTQPNYPENTDVDGLSLMKYNLLEGVQDRPITAYNIPLTSRSNSKAGGTPAGGWMAPDDPRSRIVLHMNWKGQCLPVLLRGLPPSNSLSPGDAEKLISQPQPEIEEIQRVSPYAQIRRGVYRTPTFVIHGTDDDLIPYEQSVRTVQALKDMGVRAEVSVPQGKAHLFDMFKDADGSSWEVVKRGYDFLKEEVSGK</sequence>
<feature type="chain" id="PRO_0000450873" description="Non-reducing polyketide synthase pkbA">
    <location>
        <begin position="1"/>
        <end position="2517"/>
    </location>
</feature>
<feature type="domain" description="Ketosynthase family 3 (KS3)" evidence="5 13">
    <location>
        <begin position="380"/>
        <end position="775"/>
    </location>
</feature>
<feature type="domain" description="PKS/mFAS DH" evidence="6">
    <location>
        <begin position="1221"/>
        <end position="1530"/>
    </location>
</feature>
<feature type="domain" description="Carrier 1" evidence="4">
    <location>
        <begin position="1574"/>
        <end position="1651"/>
    </location>
</feature>
<feature type="domain" description="Carrier 2" evidence="4">
    <location>
        <begin position="1685"/>
        <end position="1761"/>
    </location>
</feature>
<feature type="region of interest" description="N-terminal acylcarrier protein transacylase domain (SAT)" evidence="3 13">
    <location>
        <begin position="59"/>
        <end position="250"/>
    </location>
</feature>
<feature type="region of interest" description="Malonyl-CoA:ACP transacylase (MAT) domain" evidence="2 3">
    <location>
        <begin position="849"/>
        <end position="1158"/>
    </location>
</feature>
<feature type="region of interest" description="N-terminal hotdog fold" evidence="6">
    <location>
        <begin position="1221"/>
        <end position="1353"/>
    </location>
</feature>
<feature type="region of interest" description="Product template (PT) domain" evidence="2 3">
    <location>
        <begin position="1251"/>
        <end position="1525"/>
    </location>
</feature>
<feature type="region of interest" description="C-terminal hotdog fold" evidence="6">
    <location>
        <begin position="1379"/>
        <end position="1530"/>
    </location>
</feature>
<feature type="region of interest" description="Disordered" evidence="8">
    <location>
        <begin position="1659"/>
        <end position="1684"/>
    </location>
</feature>
<feature type="region of interest" description="Methyltransferase (CMeT) domain" evidence="2 3">
    <location>
        <begin position="1976"/>
        <end position="2075"/>
    </location>
</feature>
<feature type="region of interest" description="Thioesterase (TE) domain" evidence="2 3">
    <location>
        <begin position="2200"/>
        <end position="2514"/>
    </location>
</feature>
<feature type="compositionally biased region" description="Acidic residues" evidence="8">
    <location>
        <begin position="1662"/>
        <end position="1673"/>
    </location>
</feature>
<feature type="active site" description="For beta-ketoacyl synthase activity" evidence="5">
    <location>
        <position position="547"/>
    </location>
</feature>
<feature type="active site" description="For beta-ketoacyl synthase activity" evidence="5">
    <location>
        <position position="682"/>
    </location>
</feature>
<feature type="active site" description="For beta-ketoacyl synthase activity" evidence="5">
    <location>
        <position position="721"/>
    </location>
</feature>
<feature type="active site" description="For acyl/malonyl transferase activity" evidence="7">
    <location>
        <position position="935"/>
    </location>
</feature>
<feature type="active site" description="Proton acceptor; for dehydratase activity" evidence="6">
    <location>
        <position position="1255"/>
    </location>
</feature>
<feature type="active site" description="Proton donor; for dehydratase activity" evidence="6">
    <location>
        <position position="1437"/>
    </location>
</feature>
<feature type="modified residue" description="O-(pantetheine 4'-phosphoryl)serine" evidence="4">
    <location>
        <position position="1611"/>
    </location>
</feature>
<feature type="modified residue" description="O-(pantetheine 4'-phosphoryl)serine" evidence="4">
    <location>
        <position position="1721"/>
    </location>
</feature>
<organism>
    <name type="scientific">Emericella nidulans (strain FGSC A4 / ATCC 38163 / CBS 112.46 / NRRL 194 / M139)</name>
    <name type="common">Aspergillus nidulans</name>
    <dbReference type="NCBI Taxonomy" id="227321"/>
    <lineage>
        <taxon>Eukaryota</taxon>
        <taxon>Fungi</taxon>
        <taxon>Dikarya</taxon>
        <taxon>Ascomycota</taxon>
        <taxon>Pezizomycotina</taxon>
        <taxon>Eurotiomycetes</taxon>
        <taxon>Eurotiomycetidae</taxon>
        <taxon>Eurotiales</taxon>
        <taxon>Aspergillaceae</taxon>
        <taxon>Aspergillus</taxon>
        <taxon>Aspergillus subgen. Nidulantes</taxon>
    </lineage>
</organism>
<protein>
    <recommendedName>
        <fullName evidence="12">Non-reducing polyketide synthase pkbA</fullName>
        <shortName evidence="12">NR-PKS pkbA</shortName>
        <ecNumber evidence="9">2.3.1.-</ecNumber>
    </recommendedName>
    <alternativeName>
        <fullName evidence="12">Cichorine biosynthesis cluster protein pkbA</fullName>
    </alternativeName>
</protein>
<evidence type="ECO:0000250" key="1">
    <source>
        <dbReference type="UniProtKB" id="A0A0K0MCJ4"/>
    </source>
</evidence>
<evidence type="ECO:0000250" key="2">
    <source>
        <dbReference type="UniProtKB" id="Q0CRQ5"/>
    </source>
</evidence>
<evidence type="ECO:0000255" key="3"/>
<evidence type="ECO:0000255" key="4">
    <source>
        <dbReference type="PROSITE-ProRule" id="PRU00258"/>
    </source>
</evidence>
<evidence type="ECO:0000255" key="5">
    <source>
        <dbReference type="PROSITE-ProRule" id="PRU01348"/>
    </source>
</evidence>
<evidence type="ECO:0000255" key="6">
    <source>
        <dbReference type="PROSITE-ProRule" id="PRU01363"/>
    </source>
</evidence>
<evidence type="ECO:0000255" key="7">
    <source>
        <dbReference type="PROSITE-ProRule" id="PRU10022"/>
    </source>
</evidence>
<evidence type="ECO:0000256" key="8">
    <source>
        <dbReference type="SAM" id="MobiDB-lite"/>
    </source>
</evidence>
<evidence type="ECO:0000269" key="9">
    <source>
    </source>
</evidence>
<evidence type="ECO:0000269" key="10">
    <source>
    </source>
</evidence>
<evidence type="ECO:0000269" key="11">
    <source>
    </source>
</evidence>
<evidence type="ECO:0000303" key="12">
    <source>
    </source>
</evidence>
<evidence type="ECO:0000305" key="13">
    <source>
    </source>
</evidence>
<evidence type="ECO:0000305" key="14">
    <source>
    </source>
</evidence>
<gene>
    <name evidence="12" type="primary">pkbA</name>
    <name type="ORF">ANIA_06448</name>
</gene>
<accession>Q5AZ32</accession>
<accession>C8V0D5</accession>
<dbReference type="EC" id="2.3.1.-" evidence="9"/>
<dbReference type="EMBL" id="BN001301">
    <property type="protein sequence ID" value="CBF69451.1"/>
    <property type="molecule type" value="Genomic_DNA"/>
</dbReference>
<dbReference type="RefSeq" id="XP_664052.1">
    <property type="nucleotide sequence ID" value="XM_658960.1"/>
</dbReference>
<dbReference type="SMR" id="Q5AZ32"/>
<dbReference type="STRING" id="227321.Q5AZ32"/>
<dbReference type="ESTHER" id="emeni-q5az32">
    <property type="family name" value="BD-FAE"/>
</dbReference>
<dbReference type="EnsemblFungi" id="CBF69451">
    <property type="protein sequence ID" value="CBF69451"/>
    <property type="gene ID" value="ANIA_06448"/>
</dbReference>
<dbReference type="GeneID" id="2871344"/>
<dbReference type="KEGG" id="ani:ANIA_06448"/>
<dbReference type="eggNOG" id="KOG1202">
    <property type="taxonomic scope" value="Eukaryota"/>
</dbReference>
<dbReference type="HOGENOM" id="CLU_000022_6_3_1"/>
<dbReference type="InParanoid" id="Q5AZ32"/>
<dbReference type="OMA" id="CASDYND"/>
<dbReference type="OrthoDB" id="429813at2759"/>
<dbReference type="Proteomes" id="UP000000560">
    <property type="component" value="Chromosome I"/>
</dbReference>
<dbReference type="GO" id="GO:0004312">
    <property type="term" value="F:fatty acid synthase activity"/>
    <property type="evidence" value="ECO:0000318"/>
    <property type="project" value="GO_Central"/>
</dbReference>
<dbReference type="GO" id="GO:0008168">
    <property type="term" value="F:methyltransferase activity"/>
    <property type="evidence" value="ECO:0007669"/>
    <property type="project" value="UniProtKB-KW"/>
</dbReference>
<dbReference type="GO" id="GO:0031177">
    <property type="term" value="F:phosphopantetheine binding"/>
    <property type="evidence" value="ECO:0007669"/>
    <property type="project" value="InterPro"/>
</dbReference>
<dbReference type="GO" id="GO:0008236">
    <property type="term" value="F:serine-type peptidase activity"/>
    <property type="evidence" value="ECO:0007669"/>
    <property type="project" value="InterPro"/>
</dbReference>
<dbReference type="GO" id="GO:0062032">
    <property type="term" value="P:cichorine biosynthetic process"/>
    <property type="evidence" value="ECO:0000314"/>
    <property type="project" value="GO_Central"/>
</dbReference>
<dbReference type="GO" id="GO:0006633">
    <property type="term" value="P:fatty acid biosynthetic process"/>
    <property type="evidence" value="ECO:0000318"/>
    <property type="project" value="GO_Central"/>
</dbReference>
<dbReference type="GO" id="GO:0032259">
    <property type="term" value="P:methylation"/>
    <property type="evidence" value="ECO:0007669"/>
    <property type="project" value="UniProtKB-KW"/>
</dbReference>
<dbReference type="GO" id="GO:0006508">
    <property type="term" value="P:proteolysis"/>
    <property type="evidence" value="ECO:0007669"/>
    <property type="project" value="InterPro"/>
</dbReference>
<dbReference type="GO" id="GO:0044550">
    <property type="term" value="P:secondary metabolite biosynthetic process"/>
    <property type="evidence" value="ECO:0000318"/>
    <property type="project" value="GO_Central"/>
</dbReference>
<dbReference type="CDD" id="cd00833">
    <property type="entry name" value="PKS"/>
    <property type="match status" value="1"/>
</dbReference>
<dbReference type="Gene3D" id="3.30.70.3290">
    <property type="match status" value="1"/>
</dbReference>
<dbReference type="Gene3D" id="3.40.47.10">
    <property type="match status" value="1"/>
</dbReference>
<dbReference type="Gene3D" id="1.10.1200.10">
    <property type="entry name" value="ACP-like"/>
    <property type="match status" value="2"/>
</dbReference>
<dbReference type="Gene3D" id="3.40.50.1820">
    <property type="entry name" value="alpha/beta hydrolase"/>
    <property type="match status" value="1"/>
</dbReference>
<dbReference type="Gene3D" id="3.40.366.10">
    <property type="entry name" value="Malonyl-Coenzyme A Acyl Carrier Protein, domain 2"/>
    <property type="match status" value="3"/>
</dbReference>
<dbReference type="Gene3D" id="3.10.129.110">
    <property type="entry name" value="Polyketide synthase dehydratase"/>
    <property type="match status" value="1"/>
</dbReference>
<dbReference type="Gene3D" id="3.40.50.150">
    <property type="entry name" value="Vaccinia Virus protein VP39"/>
    <property type="match status" value="1"/>
</dbReference>
<dbReference type="InterPro" id="IPR013094">
    <property type="entry name" value="AB_hydrolase_3"/>
</dbReference>
<dbReference type="InterPro" id="IPR029058">
    <property type="entry name" value="AB_hydrolase_fold"/>
</dbReference>
<dbReference type="InterPro" id="IPR001227">
    <property type="entry name" value="Ac_transferase_dom_sf"/>
</dbReference>
<dbReference type="InterPro" id="IPR036736">
    <property type="entry name" value="ACP-like_sf"/>
</dbReference>
<dbReference type="InterPro" id="IPR014043">
    <property type="entry name" value="Acyl_transferase_dom"/>
</dbReference>
<dbReference type="InterPro" id="IPR016035">
    <property type="entry name" value="Acyl_Trfase/lysoPLipase"/>
</dbReference>
<dbReference type="InterPro" id="IPR014031">
    <property type="entry name" value="Ketoacyl_synth_C"/>
</dbReference>
<dbReference type="InterPro" id="IPR014030">
    <property type="entry name" value="Ketoacyl_synth_N"/>
</dbReference>
<dbReference type="InterPro" id="IPR016036">
    <property type="entry name" value="Malonyl_transacylase_ACP-bd"/>
</dbReference>
<dbReference type="InterPro" id="IPR013217">
    <property type="entry name" value="Methyltransf_12"/>
</dbReference>
<dbReference type="InterPro" id="IPR001375">
    <property type="entry name" value="Peptidase_S9_cat"/>
</dbReference>
<dbReference type="InterPro" id="IPR020841">
    <property type="entry name" value="PKS_Beta-ketoAc_synthase_dom"/>
</dbReference>
<dbReference type="InterPro" id="IPR042104">
    <property type="entry name" value="PKS_dehydratase_sf"/>
</dbReference>
<dbReference type="InterPro" id="IPR049551">
    <property type="entry name" value="PKS_DH_C"/>
</dbReference>
<dbReference type="InterPro" id="IPR049900">
    <property type="entry name" value="PKS_mFAS_DH"/>
</dbReference>
<dbReference type="InterPro" id="IPR050091">
    <property type="entry name" value="PKS_NRPS_Biosynth_Enz"/>
</dbReference>
<dbReference type="InterPro" id="IPR020806">
    <property type="entry name" value="PKS_PP-bd"/>
</dbReference>
<dbReference type="InterPro" id="IPR009081">
    <property type="entry name" value="PP-bd_ACP"/>
</dbReference>
<dbReference type="InterPro" id="IPR006162">
    <property type="entry name" value="Ppantetheine_attach_site"/>
</dbReference>
<dbReference type="InterPro" id="IPR029063">
    <property type="entry name" value="SAM-dependent_MTases_sf"/>
</dbReference>
<dbReference type="InterPro" id="IPR032088">
    <property type="entry name" value="SAT"/>
</dbReference>
<dbReference type="InterPro" id="IPR016039">
    <property type="entry name" value="Thiolase-like"/>
</dbReference>
<dbReference type="PANTHER" id="PTHR43775">
    <property type="entry name" value="FATTY ACID SYNTHASE"/>
    <property type="match status" value="1"/>
</dbReference>
<dbReference type="PANTHER" id="PTHR43775:SF21">
    <property type="entry name" value="NON-REDUCING POLYKETIDE SYNTHASE AUSA-RELATED"/>
    <property type="match status" value="1"/>
</dbReference>
<dbReference type="Pfam" id="PF07859">
    <property type="entry name" value="Abhydrolase_3"/>
    <property type="match status" value="1"/>
</dbReference>
<dbReference type="Pfam" id="PF00698">
    <property type="entry name" value="Acyl_transf_1"/>
    <property type="match status" value="1"/>
</dbReference>
<dbReference type="Pfam" id="PF18558">
    <property type="entry name" value="HTH_51"/>
    <property type="match status" value="1"/>
</dbReference>
<dbReference type="Pfam" id="PF00109">
    <property type="entry name" value="ketoacyl-synt"/>
    <property type="match status" value="1"/>
</dbReference>
<dbReference type="Pfam" id="PF02801">
    <property type="entry name" value="Ketoacyl-synt_C"/>
    <property type="match status" value="1"/>
</dbReference>
<dbReference type="Pfam" id="PF08242">
    <property type="entry name" value="Methyltransf_12"/>
    <property type="match status" value="1"/>
</dbReference>
<dbReference type="Pfam" id="PF00326">
    <property type="entry name" value="Peptidase_S9"/>
    <property type="match status" value="1"/>
</dbReference>
<dbReference type="Pfam" id="PF00550">
    <property type="entry name" value="PP-binding"/>
    <property type="match status" value="2"/>
</dbReference>
<dbReference type="Pfam" id="PF14765">
    <property type="entry name" value="PS-DH"/>
    <property type="match status" value="1"/>
</dbReference>
<dbReference type="Pfam" id="PF16073">
    <property type="entry name" value="SAT"/>
    <property type="match status" value="1"/>
</dbReference>
<dbReference type="SMART" id="SM00827">
    <property type="entry name" value="PKS_AT"/>
    <property type="match status" value="1"/>
</dbReference>
<dbReference type="SMART" id="SM00825">
    <property type="entry name" value="PKS_KS"/>
    <property type="match status" value="1"/>
</dbReference>
<dbReference type="SMART" id="SM00823">
    <property type="entry name" value="PKS_PP"/>
    <property type="match status" value="2"/>
</dbReference>
<dbReference type="SMART" id="SM01294">
    <property type="entry name" value="PKS_PP_betabranch"/>
    <property type="match status" value="1"/>
</dbReference>
<dbReference type="SUPFAM" id="SSF47336">
    <property type="entry name" value="ACP-like"/>
    <property type="match status" value="2"/>
</dbReference>
<dbReference type="SUPFAM" id="SSF53474">
    <property type="entry name" value="alpha/beta-Hydrolases"/>
    <property type="match status" value="1"/>
</dbReference>
<dbReference type="SUPFAM" id="SSF52151">
    <property type="entry name" value="FabD/lysophospholipase-like"/>
    <property type="match status" value="2"/>
</dbReference>
<dbReference type="SUPFAM" id="SSF55048">
    <property type="entry name" value="Probable ACP-binding domain of malonyl-CoA ACP transacylase"/>
    <property type="match status" value="1"/>
</dbReference>
<dbReference type="SUPFAM" id="SSF53335">
    <property type="entry name" value="S-adenosyl-L-methionine-dependent methyltransferases"/>
    <property type="match status" value="1"/>
</dbReference>
<dbReference type="SUPFAM" id="SSF53901">
    <property type="entry name" value="Thiolase-like"/>
    <property type="match status" value="1"/>
</dbReference>
<dbReference type="PROSITE" id="PS50075">
    <property type="entry name" value="CARRIER"/>
    <property type="match status" value="2"/>
</dbReference>
<dbReference type="PROSITE" id="PS52004">
    <property type="entry name" value="KS3_2"/>
    <property type="match status" value="1"/>
</dbReference>
<dbReference type="PROSITE" id="PS00012">
    <property type="entry name" value="PHOSPHOPANTETHEINE"/>
    <property type="match status" value="2"/>
</dbReference>
<dbReference type="PROSITE" id="PS52019">
    <property type="entry name" value="PKS_MFAS_DH"/>
    <property type="match status" value="1"/>
</dbReference>
<reference key="1">
    <citation type="journal article" date="2005" name="Nature">
        <title>Sequencing of Aspergillus nidulans and comparative analysis with A. fumigatus and A. oryzae.</title>
        <authorList>
            <person name="Galagan J.E."/>
            <person name="Calvo S.E."/>
            <person name="Cuomo C."/>
            <person name="Ma L.-J."/>
            <person name="Wortman J.R."/>
            <person name="Batzoglou S."/>
            <person name="Lee S.-I."/>
            <person name="Bastuerkmen M."/>
            <person name="Spevak C.C."/>
            <person name="Clutterbuck J."/>
            <person name="Kapitonov V."/>
            <person name="Jurka J."/>
            <person name="Scazzocchio C."/>
            <person name="Farman M.L."/>
            <person name="Butler J."/>
            <person name="Purcell S."/>
            <person name="Harris S."/>
            <person name="Braus G.H."/>
            <person name="Draht O."/>
            <person name="Busch S."/>
            <person name="D'Enfert C."/>
            <person name="Bouchier C."/>
            <person name="Goldman G.H."/>
            <person name="Bell-Pedersen D."/>
            <person name="Griffiths-Jones S."/>
            <person name="Doonan J.H."/>
            <person name="Yu J."/>
            <person name="Vienken K."/>
            <person name="Pain A."/>
            <person name="Freitag M."/>
            <person name="Selker E.U."/>
            <person name="Archer D.B."/>
            <person name="Penalva M.A."/>
            <person name="Oakley B.R."/>
            <person name="Momany M."/>
            <person name="Tanaka T."/>
            <person name="Kumagai T."/>
            <person name="Asai K."/>
            <person name="Machida M."/>
            <person name="Nierman W.C."/>
            <person name="Denning D.W."/>
            <person name="Caddick M.X."/>
            <person name="Hynes M."/>
            <person name="Paoletti M."/>
            <person name="Fischer R."/>
            <person name="Miller B.L."/>
            <person name="Dyer P.S."/>
            <person name="Sachs M.S."/>
            <person name="Osmani S.A."/>
            <person name="Birren B.W."/>
        </authorList>
    </citation>
    <scope>NUCLEOTIDE SEQUENCE [LARGE SCALE GENOMIC DNA]</scope>
    <source>
        <strain>FGSC A4 / ATCC 38163 / CBS 112.46 / NRRL 194 / M139</strain>
    </source>
</reference>
<reference key="2">
    <citation type="journal article" date="2009" name="Fungal Genet. Biol.">
        <title>The 2008 update of the Aspergillus nidulans genome annotation: a community effort.</title>
        <authorList>
            <person name="Wortman J.R."/>
            <person name="Gilsenan J.M."/>
            <person name="Joardar V."/>
            <person name="Deegan J."/>
            <person name="Clutterbuck J."/>
            <person name="Andersen M.R."/>
            <person name="Archer D."/>
            <person name="Bencina M."/>
            <person name="Braus G."/>
            <person name="Coutinho P."/>
            <person name="von Dohren H."/>
            <person name="Doonan J."/>
            <person name="Driessen A.J."/>
            <person name="Durek P."/>
            <person name="Espeso E."/>
            <person name="Fekete E."/>
            <person name="Flipphi M."/>
            <person name="Estrada C.G."/>
            <person name="Geysens S."/>
            <person name="Goldman G."/>
            <person name="de Groot P.W."/>
            <person name="Hansen K."/>
            <person name="Harris S.D."/>
            <person name="Heinekamp T."/>
            <person name="Helmstaedt K."/>
            <person name="Henrissat B."/>
            <person name="Hofmann G."/>
            <person name="Homan T."/>
            <person name="Horio T."/>
            <person name="Horiuchi H."/>
            <person name="James S."/>
            <person name="Jones M."/>
            <person name="Karaffa L."/>
            <person name="Karanyi Z."/>
            <person name="Kato M."/>
            <person name="Keller N."/>
            <person name="Kelly D.E."/>
            <person name="Kiel J.A."/>
            <person name="Kim J.M."/>
            <person name="van der Klei I.J."/>
            <person name="Klis F.M."/>
            <person name="Kovalchuk A."/>
            <person name="Krasevec N."/>
            <person name="Kubicek C.P."/>
            <person name="Liu B."/>
            <person name="Maccabe A."/>
            <person name="Meyer V."/>
            <person name="Mirabito P."/>
            <person name="Miskei M."/>
            <person name="Mos M."/>
            <person name="Mullins J."/>
            <person name="Nelson D.R."/>
            <person name="Nielsen J."/>
            <person name="Oakley B.R."/>
            <person name="Osmani S.A."/>
            <person name="Pakula T."/>
            <person name="Paszewski A."/>
            <person name="Paulsen I."/>
            <person name="Pilsyk S."/>
            <person name="Pocsi I."/>
            <person name="Punt P.J."/>
            <person name="Ram A.F."/>
            <person name="Ren Q."/>
            <person name="Robellet X."/>
            <person name="Robson G."/>
            <person name="Seiboth B."/>
            <person name="van Solingen P."/>
            <person name="Specht T."/>
            <person name="Sun J."/>
            <person name="Taheri-Talesh N."/>
            <person name="Takeshita N."/>
            <person name="Ussery D."/>
            <person name="vanKuyk P.A."/>
            <person name="Visser H."/>
            <person name="van de Vondervoort P.J."/>
            <person name="de Vries R.P."/>
            <person name="Walton J."/>
            <person name="Xiang X."/>
            <person name="Xiong Y."/>
            <person name="Zeng A.P."/>
            <person name="Brandt B.W."/>
            <person name="Cornell M.J."/>
            <person name="van den Hondel C.A."/>
            <person name="Visser J."/>
            <person name="Oliver S.G."/>
            <person name="Turner G."/>
        </authorList>
    </citation>
    <scope>GENOME REANNOTATION</scope>
    <source>
        <strain>FGSC A4 / ATCC 38163 / CBS 112.46 / NRRL 194 / M139</strain>
    </source>
</reference>
<reference key="3">
    <citation type="journal article" date="2012" name="J. Am. Chem. Soc.">
        <title>Illuminating the diversity of aromatic polyketide synthases in Aspergillus nidulans.</title>
        <authorList>
            <person name="Ahuja M."/>
            <person name="Chiang Y.M."/>
            <person name="Chang S.L."/>
            <person name="Praseuth M.B."/>
            <person name="Entwistle R."/>
            <person name="Sanchez J.F."/>
            <person name="Lo H.C."/>
            <person name="Yeh H.H."/>
            <person name="Oakley B.R."/>
            <person name="Wang C.C."/>
        </authorList>
    </citation>
    <scope>DOMAIN</scope>
    <scope>FUNCTION</scope>
    <scope>CATALYTIC ACTIVITY</scope>
    <scope>DISRUPTION PHENOTYPE</scope>
    <scope>PATHWAY</scope>
</reference>
<reference key="4">
    <citation type="journal article" date="2012" name="Med. Chem. Commun.">
        <title>Identification and molecular genetic analysis of the cichorine gene cluster in Aspergillus nidulans.</title>
        <authorList>
            <person name="Sanchez J.F."/>
            <person name="Entwistle R."/>
            <person name="Corcoran D."/>
            <person name="Oakley B.R."/>
            <person name="Wang C.C."/>
        </authorList>
    </citation>
    <scope>FUNCTION</scope>
    <scope>DISRUPTION PHENOTYPE</scope>
    <scope>PATHWAY</scope>
</reference>
<reference key="5">
    <citation type="journal article" date="2019" name="Molecules">
        <title>Discovery of three new phytotoxins from the fungus Aspergillus nidulans by pathway inactivation.</title>
        <authorList>
            <person name="Liao L."/>
            <person name="Zhang X."/>
            <person name="Lou Y."/>
            <person name="Zhou C."/>
            <person name="Yuan Q."/>
            <person name="Gao J."/>
        </authorList>
    </citation>
    <scope>FUNCTION</scope>
    <scope>DISRUPTION PHENOTYPE</scope>
    <scope>BIOTECHNOLOGY</scope>
    <scope>PATHWAY</scope>
</reference>
<comment type="function">
    <text evidence="9 10 11 14">Non-reducing polyketide synthase; part of the gene cluster that mediates the biosynthesis of cichorine, a phytotoxin active against knapweed, corn, and soybeans (PubMed:22510154, PubMed:24244835, PubMed:30708999). The first step in the pathway is performed by the non-reducing polyketide synthase pkbA that condenses one acetyl-CoA starter unit with 3 malonyl-CoA units (PubMed:22510154). PkbA also catalyzes one methylation step to produce 3-methylorsellinate (PubMed:22510154). The nonribosomal peptide synthase-like protein cicB, the cytochrome P450 monooxygenase cicH and the O-methyltransferase cicE are involved in the conversion of 3-methylorsellinate into nidulol (PubMed:24244835). CicB converts 3-methylorsellinate to a yet unidentified intermediate, cicH may play a ring-closing role for cichorine and cicE is plausibly responsible for the methylation of one of the phenol groups (Probable). The oxidoreductase cicC acts downstream with still unidentified enzymes to further convert nidulol into cichorin (PubMed:24244835).</text>
</comment>
<comment type="catalytic activity">
    <reaction evidence="9">
        <text>3 malonyl-CoA + acetyl-CoA + S-adenosyl-L-methionine + H(+) = 3-methylorsellinate + S-adenosyl-L-homocysteine + 3 CO2 + 4 CoA</text>
        <dbReference type="Rhea" id="RHEA:64500"/>
        <dbReference type="ChEBI" id="CHEBI:15378"/>
        <dbReference type="ChEBI" id="CHEBI:16526"/>
        <dbReference type="ChEBI" id="CHEBI:57287"/>
        <dbReference type="ChEBI" id="CHEBI:57288"/>
        <dbReference type="ChEBI" id="CHEBI:57384"/>
        <dbReference type="ChEBI" id="CHEBI:57856"/>
        <dbReference type="ChEBI" id="CHEBI:59789"/>
        <dbReference type="ChEBI" id="CHEBI:146372"/>
    </reaction>
    <physiologicalReaction direction="left-to-right" evidence="9">
        <dbReference type="Rhea" id="RHEA:64501"/>
    </physiologicalReaction>
</comment>
<comment type="cofactor">
    <cofactor evidence="1">
        <name>pantetheine 4'-phosphate</name>
        <dbReference type="ChEBI" id="CHEBI:47942"/>
    </cofactor>
    <text evidence="3">Binds 1 phosphopantetheine covalently.</text>
</comment>
<comment type="pathway">
    <text evidence="9 10 11">Phytotoxin biosynthesis.</text>
</comment>
<comment type="domain">
    <text evidence="13">Multidomain protein; including a starter unit:ACP transacylase (SAT) that selects the starter unit; a ketosynthase (KS) that catalyzes repeated decarboxylative condensation to elongate the polyketide backbone; a malonyl-CoA:ACP transacylase (MAT) that selects and transfers the extender unit malonyl-CoA; a product template (PT) domain that controls the immediate cyclization regioselectivity of the reactive polyketide backbone; and 2 acyl-carrier proteins (ACPs) that serve as the tether of the growing and completed polyketide via its phosphopantetheinyl arm.</text>
</comment>
<comment type="disruption phenotype">
    <text evidence="9 10">Abolishes the production of cichorine.</text>
</comment>
<comment type="biotechnology">
    <text evidence="11">Cichorine and its derivatives are promising in the course of developing novel herbicides.</text>
</comment>
<name>PKBA_EMENI</name>